<evidence type="ECO:0000250" key="1"/>
<evidence type="ECO:0000255" key="2"/>
<evidence type="ECO:0000305" key="3"/>
<reference key="1">
    <citation type="journal article" date="2000" name="Nature">
        <title>Complete genome sequence of Pseudomonas aeruginosa PAO1, an opportunistic pathogen.</title>
        <authorList>
            <person name="Stover C.K."/>
            <person name="Pham X.-Q.T."/>
            <person name="Erwin A.L."/>
            <person name="Mizoguchi S.D."/>
            <person name="Warrener P."/>
            <person name="Hickey M.J."/>
            <person name="Brinkman F.S.L."/>
            <person name="Hufnagle W.O."/>
            <person name="Kowalik D.J."/>
            <person name="Lagrou M."/>
            <person name="Garber R.L."/>
            <person name="Goltry L."/>
            <person name="Tolentino E."/>
            <person name="Westbrock-Wadman S."/>
            <person name="Yuan Y."/>
            <person name="Brody L.L."/>
            <person name="Coulter S.N."/>
            <person name="Folger K.R."/>
            <person name="Kas A."/>
            <person name="Larbig K."/>
            <person name="Lim R.M."/>
            <person name="Smith K.A."/>
            <person name="Spencer D.H."/>
            <person name="Wong G.K.-S."/>
            <person name="Wu Z."/>
            <person name="Paulsen I.T."/>
            <person name="Reizer J."/>
            <person name="Saier M.H. Jr."/>
            <person name="Hancock R.E.W."/>
            <person name="Lory S."/>
            <person name="Olson M.V."/>
        </authorList>
    </citation>
    <scope>NUCLEOTIDE SEQUENCE [LARGE SCALE GENOMIC DNA]</scope>
    <source>
        <strain>ATCC 15692 / DSM 22644 / CIP 104116 / JCM 14847 / LMG 12228 / 1C / PRS 101 / PAO1</strain>
    </source>
</reference>
<name>CYOC_PSEAE</name>
<accession>Q9I425</accession>
<dbReference type="EMBL" id="AE004091">
    <property type="protein sequence ID" value="AAG04708.1"/>
    <property type="molecule type" value="Genomic_DNA"/>
</dbReference>
<dbReference type="PIR" id="F83480">
    <property type="entry name" value="F83480"/>
</dbReference>
<dbReference type="RefSeq" id="NP_250010.1">
    <property type="nucleotide sequence ID" value="NC_002516.2"/>
</dbReference>
<dbReference type="RefSeq" id="WP_003086858.1">
    <property type="nucleotide sequence ID" value="NZ_QZGE01000005.1"/>
</dbReference>
<dbReference type="SMR" id="Q9I425"/>
<dbReference type="FunCoup" id="Q9I425">
    <property type="interactions" value="274"/>
</dbReference>
<dbReference type="STRING" id="208964.PA1319"/>
<dbReference type="PaxDb" id="208964-PA1319"/>
<dbReference type="DNASU" id="881595"/>
<dbReference type="GeneID" id="881595"/>
<dbReference type="KEGG" id="pae:PA1319"/>
<dbReference type="PATRIC" id="fig|208964.12.peg.1371"/>
<dbReference type="PseudoCAP" id="PA1319"/>
<dbReference type="HOGENOM" id="CLU_044071_3_0_6"/>
<dbReference type="InParanoid" id="Q9I425"/>
<dbReference type="OrthoDB" id="9810850at2"/>
<dbReference type="PhylomeDB" id="Q9I425"/>
<dbReference type="BioCyc" id="PAER208964:G1FZ6-1344-MONOMER"/>
<dbReference type="Proteomes" id="UP000002438">
    <property type="component" value="Chromosome"/>
</dbReference>
<dbReference type="GO" id="GO:0009319">
    <property type="term" value="C:cytochrome o ubiquinol oxidase complex"/>
    <property type="evidence" value="ECO:0000318"/>
    <property type="project" value="GO_Central"/>
</dbReference>
<dbReference type="GO" id="GO:0005886">
    <property type="term" value="C:plasma membrane"/>
    <property type="evidence" value="ECO:0000318"/>
    <property type="project" value="GO_Central"/>
</dbReference>
<dbReference type="GO" id="GO:0009486">
    <property type="term" value="F:cytochrome bo3 ubiquinol oxidase activity"/>
    <property type="evidence" value="ECO:0000318"/>
    <property type="project" value="GO_Central"/>
</dbReference>
<dbReference type="GO" id="GO:0004129">
    <property type="term" value="F:cytochrome-c oxidase activity"/>
    <property type="evidence" value="ECO:0007669"/>
    <property type="project" value="InterPro"/>
</dbReference>
<dbReference type="GO" id="GO:0019646">
    <property type="term" value="P:aerobic electron transport chain"/>
    <property type="evidence" value="ECO:0000318"/>
    <property type="project" value="GO_Central"/>
</dbReference>
<dbReference type="GO" id="GO:0015990">
    <property type="term" value="P:electron transport coupled proton transport"/>
    <property type="evidence" value="ECO:0000318"/>
    <property type="project" value="GO_Central"/>
</dbReference>
<dbReference type="CDD" id="cd02863">
    <property type="entry name" value="Ubiquinol_oxidase_III"/>
    <property type="match status" value="1"/>
</dbReference>
<dbReference type="FunFam" id="1.20.120.80:FF:000001">
    <property type="entry name" value="Cytochrome (Ubi)quinol oxidase subunit III"/>
    <property type="match status" value="1"/>
</dbReference>
<dbReference type="Gene3D" id="1.20.120.80">
    <property type="entry name" value="Cytochrome c oxidase, subunit III, four-helix bundle"/>
    <property type="match status" value="1"/>
</dbReference>
<dbReference type="InterPro" id="IPR024791">
    <property type="entry name" value="Cyt_c/ubiquinol_Oxase_su3"/>
</dbReference>
<dbReference type="InterPro" id="IPR000298">
    <property type="entry name" value="Cyt_c_oxidase-like_su3"/>
</dbReference>
<dbReference type="InterPro" id="IPR035973">
    <property type="entry name" value="Cyt_c_oxidase_su3-like_sf"/>
</dbReference>
<dbReference type="InterPro" id="IPR013833">
    <property type="entry name" value="Cyt_c_oxidase_su3_a-hlx"/>
</dbReference>
<dbReference type="InterPro" id="IPR014206">
    <property type="entry name" value="Cyt_c_ubiqinol_oxidase_su3"/>
</dbReference>
<dbReference type="InterPro" id="IPR033946">
    <property type="entry name" value="Ubiquinol_oxase_su3_dom"/>
</dbReference>
<dbReference type="NCBIfam" id="TIGR02842">
    <property type="entry name" value="CyoC"/>
    <property type="match status" value="1"/>
</dbReference>
<dbReference type="PANTHER" id="PTHR11403:SF2">
    <property type="entry name" value="CYTOCHROME BO(3) UBIQUINOL OXIDASE SUBUNIT 3"/>
    <property type="match status" value="1"/>
</dbReference>
<dbReference type="PANTHER" id="PTHR11403">
    <property type="entry name" value="CYTOCHROME C OXIDASE SUBUNIT III"/>
    <property type="match status" value="1"/>
</dbReference>
<dbReference type="Pfam" id="PF00510">
    <property type="entry name" value="COX3"/>
    <property type="match status" value="1"/>
</dbReference>
<dbReference type="SUPFAM" id="SSF81452">
    <property type="entry name" value="Cytochrome c oxidase subunit III-like"/>
    <property type="match status" value="1"/>
</dbReference>
<dbReference type="PROSITE" id="PS50253">
    <property type="entry name" value="COX3"/>
    <property type="match status" value="1"/>
</dbReference>
<feature type="chain" id="PRO_0000287757" description="Cytochrome bo(3) ubiquinol oxidase subunit 3">
    <location>
        <begin position="1"/>
        <end position="209"/>
    </location>
</feature>
<feature type="topological domain" description="Cytoplasmic" evidence="2">
    <location>
        <begin position="1"/>
        <end position="29"/>
    </location>
</feature>
<feature type="transmembrane region" description="Helical" evidence="2">
    <location>
        <begin position="30"/>
        <end position="50"/>
    </location>
</feature>
<feature type="topological domain" description="Periplasmic" evidence="2">
    <location>
        <begin position="51"/>
        <end position="72"/>
    </location>
</feature>
<feature type="transmembrane region" description="Helical" evidence="2">
    <location>
        <begin position="73"/>
        <end position="93"/>
    </location>
</feature>
<feature type="topological domain" description="Cytoplasmic" evidence="2">
    <location>
        <begin position="94"/>
        <end position="102"/>
    </location>
</feature>
<feature type="transmembrane region" description="Helical" evidence="2">
    <location>
        <begin position="103"/>
        <end position="123"/>
    </location>
</feature>
<feature type="topological domain" description="Periplasmic" evidence="2">
    <location>
        <begin position="124"/>
        <end position="143"/>
    </location>
</feature>
<feature type="transmembrane region" description="Helical" evidence="2">
    <location>
        <begin position="144"/>
        <end position="164"/>
    </location>
</feature>
<feature type="topological domain" description="Cytoplasmic" evidence="2">
    <location>
        <begin position="165"/>
        <end position="186"/>
    </location>
</feature>
<feature type="transmembrane region" description="Helical" evidence="2">
    <location>
        <begin position="187"/>
        <end position="207"/>
    </location>
</feature>
<feature type="topological domain" description="Periplasmic" evidence="2">
    <location>
        <begin position="208"/>
        <end position="209"/>
    </location>
</feature>
<keyword id="KW-0997">Cell inner membrane</keyword>
<keyword id="KW-1003">Cell membrane</keyword>
<keyword id="KW-0249">Electron transport</keyword>
<keyword id="KW-0472">Membrane</keyword>
<keyword id="KW-0560">Oxidoreductase</keyword>
<keyword id="KW-1185">Reference proteome</keyword>
<keyword id="KW-0812">Transmembrane</keyword>
<keyword id="KW-1133">Transmembrane helix</keyword>
<keyword id="KW-0813">Transport</keyword>
<gene>
    <name type="primary">cyoC</name>
    <name type="ordered locus">PA1319</name>
</gene>
<sequence>MSTAVLNKHLADAHEVGHDHDHAHDSGGNTVFGFWLYLMTDCVLFASVFATYAVLVHHTAGGPSGKDIFELPYVLVETAILLVSSCTYGLAMLSAHKGAKGQAIAWLGVTFLLGAAFIGMEINEFHHLIAEGFGPSRSAFLSSFFTLVGMHGLHVSAGLLWMLVLMAQIWTRGLTAQNNTRMMCLSLFWHFLDIVWICVFTVVYLMGAL</sequence>
<comment type="function">
    <text evidence="1">Cytochrome bo(3) ubiquinol terminal oxidase is the component of the aerobic respiratory chain of E.coli that predominates when cells are grown at high aeration. Has proton pump activity across the membrane in addition to electron transfer, pumping 2 protons/electron (By similarity).</text>
</comment>
<comment type="subunit">
    <text evidence="1">Heterooctamer of two A chains, two B chains, two C chains and two D chains.</text>
</comment>
<comment type="subcellular location">
    <subcellularLocation>
        <location evidence="1">Cell inner membrane</location>
        <topology evidence="1">Multi-pass membrane protein</topology>
    </subcellularLocation>
</comment>
<comment type="similarity">
    <text evidence="3">Belongs to the cytochrome c oxidase subunit 3 family.</text>
</comment>
<proteinExistence type="inferred from homology"/>
<protein>
    <recommendedName>
        <fullName>Cytochrome bo(3) ubiquinol oxidase subunit 3</fullName>
    </recommendedName>
    <alternativeName>
        <fullName>Cytochrome o ubiquinol oxidase subunit 3</fullName>
        <shortName>Cytochrome o subunit 3</shortName>
    </alternativeName>
    <alternativeName>
        <fullName>Oxidase bo(3) subunit 3</fullName>
    </alternativeName>
    <alternativeName>
        <fullName>Ubiquinol oxidase polypeptide III</fullName>
    </alternativeName>
    <alternativeName>
        <fullName>Ubiquinol oxidase subunit 3</fullName>
    </alternativeName>
</protein>
<organism>
    <name type="scientific">Pseudomonas aeruginosa (strain ATCC 15692 / DSM 22644 / CIP 104116 / JCM 14847 / LMG 12228 / 1C / PRS 101 / PAO1)</name>
    <dbReference type="NCBI Taxonomy" id="208964"/>
    <lineage>
        <taxon>Bacteria</taxon>
        <taxon>Pseudomonadati</taxon>
        <taxon>Pseudomonadota</taxon>
        <taxon>Gammaproteobacteria</taxon>
        <taxon>Pseudomonadales</taxon>
        <taxon>Pseudomonadaceae</taxon>
        <taxon>Pseudomonas</taxon>
    </lineage>
</organism>